<accession>Q87C37</accession>
<sequence>MSRLRIFDDHTPDTPFFVSKEQAQITAELHKIGITFERWEATQAIEPGATAEQVMAAYRTDIDRLIATHGFKTVDVISIAPDNAKREEMRAKFLEEHFHKEDEVRFFVAGSGLFTVHSGNKVYEIECVKNDLIAIPDGTLHWFDMGAAPYFVAIRFFTEPDGWVGHFTGTDIAQRFPRYIPEGCQSAH</sequence>
<proteinExistence type="inferred from homology"/>
<name>MTND_XYLFT</name>
<comment type="function">
    <text evidence="1">Catalyzes 2 different reactions between oxygen and the acireductone 1,2-dihydroxy-3-keto-5-methylthiopentene (DHK-MTPene) depending upon the metal bound in the active site. Fe-containing acireductone dioxygenase (Fe-ARD) produces formate and 2-keto-4-methylthiobutyrate (KMTB), the alpha-ketoacid precursor of methionine in the methionine recycle pathway. Ni-containing acireductone dioxygenase (Ni-ARD) produces methylthiopropionate, carbon monoxide and formate, and does not lie on the methionine recycle pathway.</text>
</comment>
<comment type="catalytic activity">
    <reaction evidence="1">
        <text>1,2-dihydroxy-5-(methylsulfanyl)pent-1-en-3-one + O2 = 3-(methylsulfanyl)propanoate + CO + formate + 2 H(+)</text>
        <dbReference type="Rhea" id="RHEA:14161"/>
        <dbReference type="ChEBI" id="CHEBI:15378"/>
        <dbReference type="ChEBI" id="CHEBI:15379"/>
        <dbReference type="ChEBI" id="CHEBI:15740"/>
        <dbReference type="ChEBI" id="CHEBI:17245"/>
        <dbReference type="ChEBI" id="CHEBI:49016"/>
        <dbReference type="ChEBI" id="CHEBI:49252"/>
        <dbReference type="EC" id="1.13.11.53"/>
    </reaction>
</comment>
<comment type="catalytic activity">
    <reaction evidence="1">
        <text>1,2-dihydroxy-5-(methylsulfanyl)pent-1-en-3-one + O2 = 4-methylsulfanyl-2-oxobutanoate + formate + 2 H(+)</text>
        <dbReference type="Rhea" id="RHEA:24504"/>
        <dbReference type="ChEBI" id="CHEBI:15378"/>
        <dbReference type="ChEBI" id="CHEBI:15379"/>
        <dbReference type="ChEBI" id="CHEBI:15740"/>
        <dbReference type="ChEBI" id="CHEBI:16723"/>
        <dbReference type="ChEBI" id="CHEBI:49252"/>
        <dbReference type="EC" id="1.13.11.54"/>
    </reaction>
</comment>
<comment type="cofactor">
    <cofactor evidence="1">
        <name>Fe(2+)</name>
        <dbReference type="ChEBI" id="CHEBI:29033"/>
    </cofactor>
    <text evidence="1">Binds 1 Fe(2+) cation per monomer.</text>
</comment>
<comment type="cofactor">
    <cofactor evidence="1">
        <name>Ni(2+)</name>
        <dbReference type="ChEBI" id="CHEBI:49786"/>
    </cofactor>
    <text evidence="1">Binds 1 nickel ion per monomer.</text>
</comment>
<comment type="pathway">
    <text evidence="1">Amino-acid biosynthesis; L-methionine biosynthesis via salvage pathway; L-methionine from S-methyl-5-thio-alpha-D-ribose 1-phosphate: step 5/6.</text>
</comment>
<comment type="subunit">
    <text evidence="1">Monomer.</text>
</comment>
<comment type="similarity">
    <text evidence="1">Belongs to the acireductone dioxygenase (ARD) family.</text>
</comment>
<protein>
    <recommendedName>
        <fullName evidence="1">Acireductone dioxygenase</fullName>
    </recommendedName>
    <alternativeName>
        <fullName evidence="1">1,2-dihydroxy-3-keto-5-methylthiopentene dioxygenase</fullName>
        <shortName evidence="1">DHK-MTPene dioxygenase</shortName>
    </alternativeName>
    <alternativeName>
        <fullName evidence="1">Acireductone dioxygenase (Fe(2+)-requiring)</fullName>
        <shortName evidence="1">ARD'</shortName>
        <shortName evidence="1">Fe-ARD</shortName>
        <ecNumber evidence="1">1.13.11.54</ecNumber>
    </alternativeName>
    <alternativeName>
        <fullName evidence="1">Acireductone dioxygenase (Ni(2+)-requiring)</fullName>
        <shortName evidence="1">ARD</shortName>
        <shortName evidence="1">Ni-ARD</shortName>
        <ecNumber evidence="1">1.13.11.53</ecNumber>
    </alternativeName>
</protein>
<gene>
    <name evidence="1" type="primary">mtnD</name>
    <name type="ordered locus">PD_1259</name>
</gene>
<evidence type="ECO:0000255" key="1">
    <source>
        <dbReference type="HAMAP-Rule" id="MF_01682"/>
    </source>
</evidence>
<keyword id="KW-0028">Amino-acid biosynthesis</keyword>
<keyword id="KW-0223">Dioxygenase</keyword>
<keyword id="KW-0408">Iron</keyword>
<keyword id="KW-0479">Metal-binding</keyword>
<keyword id="KW-0486">Methionine biosynthesis</keyword>
<keyword id="KW-0533">Nickel</keyword>
<keyword id="KW-0560">Oxidoreductase</keyword>
<keyword id="KW-1185">Reference proteome</keyword>
<reference key="1">
    <citation type="journal article" date="2003" name="J. Bacteriol.">
        <title>Comparative analyses of the complete genome sequences of Pierce's disease and citrus variegated chlorosis strains of Xylella fastidiosa.</title>
        <authorList>
            <person name="Van Sluys M.A."/>
            <person name="de Oliveira M.C."/>
            <person name="Monteiro-Vitorello C.B."/>
            <person name="Miyaki C.Y."/>
            <person name="Furlan L.R."/>
            <person name="Camargo L.E.A."/>
            <person name="da Silva A.C.R."/>
            <person name="Moon D.H."/>
            <person name="Takita M.A."/>
            <person name="Lemos E.G.M."/>
            <person name="Machado M.A."/>
            <person name="Ferro M.I.T."/>
            <person name="da Silva F.R."/>
            <person name="Goldman M.H.S."/>
            <person name="Goldman G.H."/>
            <person name="Lemos M.V.F."/>
            <person name="El-Dorry H."/>
            <person name="Tsai S.M."/>
            <person name="Carrer H."/>
            <person name="Carraro D.M."/>
            <person name="de Oliveira R.C."/>
            <person name="Nunes L.R."/>
            <person name="Siqueira W.J."/>
            <person name="Coutinho L.L."/>
            <person name="Kimura E.T."/>
            <person name="Ferro E.S."/>
            <person name="Harakava R."/>
            <person name="Kuramae E.E."/>
            <person name="Marino C.L."/>
            <person name="Giglioti E."/>
            <person name="Abreu I.L."/>
            <person name="Alves L.M.C."/>
            <person name="do Amaral A.M."/>
            <person name="Baia G.S."/>
            <person name="Blanco S.R."/>
            <person name="Brito M.S."/>
            <person name="Cannavan F.S."/>
            <person name="Celestino A.V."/>
            <person name="da Cunha A.F."/>
            <person name="Fenille R.C."/>
            <person name="Ferro J.A."/>
            <person name="Formighieri E.F."/>
            <person name="Kishi L.T."/>
            <person name="Leoni S.G."/>
            <person name="Oliveira A.R."/>
            <person name="Rosa V.E. Jr."/>
            <person name="Sassaki F.T."/>
            <person name="Sena J.A.D."/>
            <person name="de Souza A.A."/>
            <person name="Truffi D."/>
            <person name="Tsukumo F."/>
            <person name="Yanai G.M."/>
            <person name="Zaros L.G."/>
            <person name="Civerolo E.L."/>
            <person name="Simpson A.J.G."/>
            <person name="Almeida N.F. Jr."/>
            <person name="Setubal J.C."/>
            <person name="Kitajima J.P."/>
        </authorList>
    </citation>
    <scope>NUCLEOTIDE SEQUENCE [LARGE SCALE GENOMIC DNA]</scope>
    <source>
        <strain>Temecula1 / ATCC 700964</strain>
    </source>
</reference>
<feature type="chain" id="PRO_0000359257" description="Acireductone dioxygenase">
    <location>
        <begin position="1"/>
        <end position="188"/>
    </location>
</feature>
<feature type="binding site" evidence="1">
    <location>
        <position position="97"/>
    </location>
    <ligand>
        <name>Fe(2+)</name>
        <dbReference type="ChEBI" id="CHEBI:29033"/>
    </ligand>
</feature>
<feature type="binding site" evidence="1">
    <location>
        <position position="97"/>
    </location>
    <ligand>
        <name>Ni(2+)</name>
        <dbReference type="ChEBI" id="CHEBI:49786"/>
    </ligand>
</feature>
<feature type="binding site" evidence="1">
    <location>
        <position position="99"/>
    </location>
    <ligand>
        <name>Fe(2+)</name>
        <dbReference type="ChEBI" id="CHEBI:29033"/>
    </ligand>
</feature>
<feature type="binding site" evidence="1">
    <location>
        <position position="99"/>
    </location>
    <ligand>
        <name>Ni(2+)</name>
        <dbReference type="ChEBI" id="CHEBI:49786"/>
    </ligand>
</feature>
<feature type="binding site" evidence="1">
    <location>
        <position position="103"/>
    </location>
    <ligand>
        <name>Fe(2+)</name>
        <dbReference type="ChEBI" id="CHEBI:29033"/>
    </ligand>
</feature>
<feature type="binding site" evidence="1">
    <location>
        <position position="103"/>
    </location>
    <ligand>
        <name>Ni(2+)</name>
        <dbReference type="ChEBI" id="CHEBI:49786"/>
    </ligand>
</feature>
<feature type="binding site" evidence="1">
    <location>
        <position position="141"/>
    </location>
    <ligand>
        <name>Fe(2+)</name>
        <dbReference type="ChEBI" id="CHEBI:29033"/>
    </ligand>
</feature>
<feature type="binding site" evidence="1">
    <location>
        <position position="141"/>
    </location>
    <ligand>
        <name>Ni(2+)</name>
        <dbReference type="ChEBI" id="CHEBI:49786"/>
    </ligand>
</feature>
<feature type="site" description="May play a role in metal incorporation in vivo" evidence="1">
    <location>
        <position position="96"/>
    </location>
</feature>
<feature type="site" description="May play a role in transmitting local conformational changes" evidence="1">
    <location>
        <position position="102"/>
    </location>
</feature>
<feature type="site" description="Important to generate the dianion" evidence="1">
    <location>
        <position position="105"/>
    </location>
</feature>
<dbReference type="EC" id="1.13.11.54" evidence="1"/>
<dbReference type="EC" id="1.13.11.53" evidence="1"/>
<dbReference type="EMBL" id="AE009442">
    <property type="protein sequence ID" value="AAO29108.1"/>
    <property type="molecule type" value="Genomic_DNA"/>
</dbReference>
<dbReference type="RefSeq" id="WP_004088322.1">
    <property type="nucleotide sequence ID" value="NC_004556.1"/>
</dbReference>
<dbReference type="SMR" id="Q87C37"/>
<dbReference type="KEGG" id="xft:PD_1259"/>
<dbReference type="HOGENOM" id="CLU_125400_0_0_6"/>
<dbReference type="UniPathway" id="UPA00904">
    <property type="reaction ID" value="UER00878"/>
</dbReference>
<dbReference type="Proteomes" id="UP000002516">
    <property type="component" value="Chromosome"/>
</dbReference>
<dbReference type="GO" id="GO:0010308">
    <property type="term" value="F:acireductone dioxygenase (Ni2+-requiring) activity"/>
    <property type="evidence" value="ECO:0007669"/>
    <property type="project" value="UniProtKB-UniRule"/>
</dbReference>
<dbReference type="GO" id="GO:0010309">
    <property type="term" value="F:acireductone dioxygenase [iron(II)-requiring] activity"/>
    <property type="evidence" value="ECO:0007669"/>
    <property type="project" value="UniProtKB-UniRule"/>
</dbReference>
<dbReference type="GO" id="GO:0005506">
    <property type="term" value="F:iron ion binding"/>
    <property type="evidence" value="ECO:0007669"/>
    <property type="project" value="UniProtKB-UniRule"/>
</dbReference>
<dbReference type="GO" id="GO:0016151">
    <property type="term" value="F:nickel cation binding"/>
    <property type="evidence" value="ECO:0007669"/>
    <property type="project" value="UniProtKB-UniRule"/>
</dbReference>
<dbReference type="GO" id="GO:0019509">
    <property type="term" value="P:L-methionine salvage from methylthioadenosine"/>
    <property type="evidence" value="ECO:0007669"/>
    <property type="project" value="UniProtKB-UniRule"/>
</dbReference>
<dbReference type="GO" id="GO:0019284">
    <property type="term" value="P:L-methionine salvage from S-adenosylmethionine"/>
    <property type="evidence" value="ECO:0007669"/>
    <property type="project" value="InterPro"/>
</dbReference>
<dbReference type="CDD" id="cd02232">
    <property type="entry name" value="cupin_ARD"/>
    <property type="match status" value="1"/>
</dbReference>
<dbReference type="Gene3D" id="2.60.120.10">
    <property type="entry name" value="Jelly Rolls"/>
    <property type="match status" value="1"/>
</dbReference>
<dbReference type="HAMAP" id="MF_01682">
    <property type="entry name" value="Salvage_MtnD"/>
    <property type="match status" value="1"/>
</dbReference>
<dbReference type="InterPro" id="IPR004313">
    <property type="entry name" value="ARD"/>
</dbReference>
<dbReference type="InterPro" id="IPR023956">
    <property type="entry name" value="ARD_bac"/>
</dbReference>
<dbReference type="InterPro" id="IPR014710">
    <property type="entry name" value="RmlC-like_jellyroll"/>
</dbReference>
<dbReference type="InterPro" id="IPR011051">
    <property type="entry name" value="RmlC_Cupin_sf"/>
</dbReference>
<dbReference type="PANTHER" id="PTHR23418">
    <property type="entry name" value="ACIREDUCTONE DIOXYGENASE"/>
    <property type="match status" value="1"/>
</dbReference>
<dbReference type="PANTHER" id="PTHR23418:SF0">
    <property type="entry name" value="ACIREDUCTONE DIOXYGENASE"/>
    <property type="match status" value="1"/>
</dbReference>
<dbReference type="Pfam" id="PF03079">
    <property type="entry name" value="ARD"/>
    <property type="match status" value="1"/>
</dbReference>
<dbReference type="SUPFAM" id="SSF51182">
    <property type="entry name" value="RmlC-like cupins"/>
    <property type="match status" value="1"/>
</dbReference>
<organism>
    <name type="scientific">Xylella fastidiosa (strain Temecula1 / ATCC 700964)</name>
    <dbReference type="NCBI Taxonomy" id="183190"/>
    <lineage>
        <taxon>Bacteria</taxon>
        <taxon>Pseudomonadati</taxon>
        <taxon>Pseudomonadota</taxon>
        <taxon>Gammaproteobacteria</taxon>
        <taxon>Lysobacterales</taxon>
        <taxon>Lysobacteraceae</taxon>
        <taxon>Xylella</taxon>
    </lineage>
</organism>